<feature type="chain" id="PRO_0000310477" description="Sodium-coupled neutral amino acid symporter 1">
    <location>
        <begin position="1"/>
        <end position="487"/>
    </location>
</feature>
<feature type="topological domain" description="Cytoplasmic" evidence="4">
    <location>
        <begin position="1"/>
        <end position="74"/>
    </location>
</feature>
<feature type="transmembrane region" description="Helical" evidence="4">
    <location>
        <begin position="75"/>
        <end position="97"/>
    </location>
</feature>
<feature type="topological domain" description="Extracellular" evidence="4">
    <location>
        <begin position="98"/>
        <end position="112"/>
    </location>
</feature>
<feature type="transmembrane region" description="Helical" evidence="4">
    <location>
        <begin position="113"/>
        <end position="133"/>
    </location>
</feature>
<feature type="topological domain" description="Cytoplasmic" evidence="4">
    <location>
        <begin position="134"/>
        <end position="147"/>
    </location>
</feature>
<feature type="transmembrane region" description="Helical" evidence="4">
    <location>
        <begin position="148"/>
        <end position="168"/>
    </location>
</feature>
<feature type="topological domain" description="Extracellular" evidence="4">
    <location>
        <begin position="169"/>
        <end position="188"/>
    </location>
</feature>
<feature type="transmembrane region" description="Helical" evidence="4">
    <location>
        <begin position="189"/>
        <end position="211"/>
    </location>
</feature>
<feature type="topological domain" description="Cytoplasmic" evidence="4">
    <location>
        <begin position="212"/>
        <end position="216"/>
    </location>
</feature>
<feature type="transmembrane region" description="Helical" evidence="4">
    <location>
        <begin position="217"/>
        <end position="237"/>
    </location>
</feature>
<feature type="topological domain" description="Extracellular" evidence="4">
    <location>
        <begin position="238"/>
        <end position="275"/>
    </location>
</feature>
<feature type="transmembrane region" description="Helical" evidence="4">
    <location>
        <begin position="276"/>
        <end position="296"/>
    </location>
</feature>
<feature type="topological domain" description="Cytoplasmic" evidence="4">
    <location>
        <begin position="297"/>
        <end position="312"/>
    </location>
</feature>
<feature type="transmembrane region" description="Helical" evidence="4">
    <location>
        <begin position="313"/>
        <end position="333"/>
    </location>
</feature>
<feature type="topological domain" description="Extracellular" evidence="4">
    <location>
        <begin position="334"/>
        <end position="350"/>
    </location>
</feature>
<feature type="transmembrane region" description="Helical" evidence="4">
    <location>
        <begin position="351"/>
        <end position="371"/>
    </location>
</feature>
<feature type="topological domain" description="Cytoplasmic" evidence="4">
    <location>
        <begin position="372"/>
        <end position="393"/>
    </location>
</feature>
<feature type="transmembrane region" description="Helical" evidence="4">
    <location>
        <begin position="394"/>
        <end position="414"/>
    </location>
</feature>
<feature type="topological domain" description="Extracellular" evidence="4">
    <location>
        <begin position="415"/>
        <end position="416"/>
    </location>
</feature>
<feature type="transmembrane region" description="Helical" evidence="4">
    <location>
        <begin position="417"/>
        <end position="437"/>
    </location>
</feature>
<feature type="topological domain" description="Cytoplasmic" evidence="4">
    <location>
        <begin position="438"/>
        <end position="452"/>
    </location>
</feature>
<feature type="transmembrane region" description="Helical" evidence="4">
    <location>
        <begin position="453"/>
        <end position="473"/>
    </location>
</feature>
<feature type="topological domain" description="Extracellular" evidence="4">
    <location>
        <begin position="474"/>
        <end position="487"/>
    </location>
</feature>
<feature type="modified residue" description="Phosphoserine" evidence="1">
    <location>
        <position position="6"/>
    </location>
</feature>
<feature type="modified residue" description="Phosphothreonine" evidence="1">
    <location>
        <position position="11"/>
    </location>
</feature>
<feature type="modified residue" description="Phosphoserine" evidence="2">
    <location>
        <position position="25"/>
    </location>
</feature>
<feature type="modified residue" description="Phosphoserine" evidence="2">
    <location>
        <position position="28"/>
    </location>
</feature>
<feature type="modified residue" description="Phosphoserine" evidence="2">
    <location>
        <position position="49"/>
    </location>
</feature>
<feature type="modified residue" description="Phosphoserine" evidence="2">
    <location>
        <position position="52"/>
    </location>
</feature>
<feature type="modified residue" description="Phosphothreonine" evidence="2">
    <location>
        <position position="54"/>
    </location>
</feature>
<feature type="modified residue" description="Phosphoserine" evidence="2">
    <location>
        <position position="56"/>
    </location>
</feature>
<feature type="glycosylation site" description="N-linked (GlcNAc...) asparagine" evidence="4">
    <location>
        <position position="251"/>
    </location>
</feature>
<feature type="glycosylation site" description="N-linked (GlcNAc...) asparagine" evidence="4">
    <location>
        <position position="257"/>
    </location>
</feature>
<feature type="disulfide bond" evidence="5">
    <location>
        <begin position="245"/>
        <end position="264"/>
    </location>
</feature>
<name>S38A1_PONAB</name>
<keyword id="KW-0029">Amino-acid transport</keyword>
<keyword id="KW-1003">Cell membrane</keyword>
<keyword id="KW-1015">Disulfide bond</keyword>
<keyword id="KW-0325">Glycoprotein</keyword>
<keyword id="KW-0406">Ion transport</keyword>
<keyword id="KW-0472">Membrane</keyword>
<keyword id="KW-0597">Phosphoprotein</keyword>
<keyword id="KW-1185">Reference proteome</keyword>
<keyword id="KW-0915">Sodium</keyword>
<keyword id="KW-0739">Sodium transport</keyword>
<keyword id="KW-0769">Symport</keyword>
<keyword id="KW-0812">Transmembrane</keyword>
<keyword id="KW-1133">Transmembrane helix</keyword>
<keyword id="KW-0813">Transport</keyword>
<proteinExistence type="evidence at transcript level"/>
<accession>Q5R443</accession>
<sequence>MMHFKSGLELTELQNMTVPEDDNISNDSNDFTEVENGQINSKFISDRESRRSLTNSHLEKKKCDEYIPGTTSLGMSVFNLSNAIMGSGILGLAFALANTGILLFLVLLTSVTLLSIYSINLLLICSKETGCMVYEKLGEQVFGTTGKFVIFGATSLQNTGAMLSYLFIVKNELPSAIKFLMGKEETFSAWYVDGRVLVVIVTFGIILPLCLLKNLGYLGYTSGFSLSCMVFFLIVVIYKKFQIPCIVPELNSTISANSTNADTCTPKYVTLNSKTVYALPTIAFAFVCHPSVLPIYSELKDRSQKKMQMVSNISFFAMFVMYFLTAIFGYLTFYDNVQSDLLHKYQGKDDILILTVRLAVIVAVILTVPVLFFTVRSSLFELAKKTKFNLCRHTVVTCILLVVINLLVISIPSMKDIFGVVGVTSANMLIFILPSSLYLKITDQDGDKGTQRIWAALFLGLGVLFSLVSIPLVIYDWACSSSSDEGH</sequence>
<evidence type="ECO:0000250" key="1">
    <source>
        <dbReference type="UniProtKB" id="Q8K2P7"/>
    </source>
</evidence>
<evidence type="ECO:0000250" key="2">
    <source>
        <dbReference type="UniProtKB" id="Q9H2H9"/>
    </source>
</evidence>
<evidence type="ECO:0000250" key="3">
    <source>
        <dbReference type="UniProtKB" id="Q9JM15"/>
    </source>
</evidence>
<evidence type="ECO:0000255" key="4"/>
<evidence type="ECO:0000255" key="5">
    <source>
        <dbReference type="PROSITE-ProRule" id="PRU00114"/>
    </source>
</evidence>
<evidence type="ECO:0000305" key="6"/>
<comment type="function">
    <text evidence="1 2 3">Symporter that cotransports short-chain neutral amino acids and sodium ions from the extraccellular to the intracellular side of the cell membrane. The transport is elctrogenic, pH dependent and driven by the Na(+) electrochemical gradient. Participates in the astroglia-derived glutamine transport into GABAergic interneurons for neurotransmitter GABA de novo synthesis (By similarity). May also contributes to amino acid transport in placental trophoblast (By similarity). Regulates synaptic plasticity (By similarity).</text>
</comment>
<comment type="catalytic activity">
    <reaction evidence="3">
        <text>L-glutamine(in) + Na(+)(in) = L-glutamine(out) + Na(+)(out)</text>
        <dbReference type="Rhea" id="RHEA:68236"/>
        <dbReference type="ChEBI" id="CHEBI:29101"/>
        <dbReference type="ChEBI" id="CHEBI:58359"/>
    </reaction>
    <physiologicalReaction direction="right-to-left" evidence="3">
        <dbReference type="Rhea" id="RHEA:68238"/>
    </physiologicalReaction>
</comment>
<comment type="catalytic activity">
    <reaction evidence="3">
        <text>L-alanine(in) + Na(+)(in) = L-alanine(out) + Na(+)(out)</text>
        <dbReference type="Rhea" id="RHEA:29283"/>
        <dbReference type="ChEBI" id="CHEBI:29101"/>
        <dbReference type="ChEBI" id="CHEBI:57972"/>
    </reaction>
    <physiologicalReaction direction="right-to-left" evidence="3">
        <dbReference type="Rhea" id="RHEA:29285"/>
    </physiologicalReaction>
</comment>
<comment type="catalytic activity">
    <reaction evidence="3">
        <text>L-asparagine(in) + Na(+)(in) = L-asparagine(out) + Na(+)(out)</text>
        <dbReference type="Rhea" id="RHEA:71383"/>
        <dbReference type="ChEBI" id="CHEBI:29101"/>
        <dbReference type="ChEBI" id="CHEBI:58048"/>
    </reaction>
    <physiologicalReaction direction="right-to-left" evidence="3">
        <dbReference type="Rhea" id="RHEA:71385"/>
    </physiologicalReaction>
</comment>
<comment type="catalytic activity">
    <reaction evidence="3">
        <text>L-histidine(in) + Na(+)(in) = L-histidine(out) + Na(+)(out)</text>
        <dbReference type="Rhea" id="RHEA:71583"/>
        <dbReference type="ChEBI" id="CHEBI:29101"/>
        <dbReference type="ChEBI" id="CHEBI:57595"/>
    </reaction>
    <physiologicalReaction direction="right-to-left" evidence="3">
        <dbReference type="Rhea" id="RHEA:71585"/>
    </physiologicalReaction>
</comment>
<comment type="catalytic activity">
    <reaction evidence="3">
        <text>L-serine(in) + Na(+)(in) = L-serine(out) + Na(+)(out)</text>
        <dbReference type="Rhea" id="RHEA:29575"/>
        <dbReference type="ChEBI" id="CHEBI:29101"/>
        <dbReference type="ChEBI" id="CHEBI:33384"/>
    </reaction>
    <physiologicalReaction direction="right-to-left" evidence="3">
        <dbReference type="Rhea" id="RHEA:29577"/>
    </physiologicalReaction>
</comment>
<comment type="catalytic activity">
    <reaction evidence="3">
        <text>L-cysteine(in) + Na(+)(in) = L-cysteine(out) + Na(+)(out)</text>
        <dbReference type="Rhea" id="RHEA:68232"/>
        <dbReference type="ChEBI" id="CHEBI:29101"/>
        <dbReference type="ChEBI" id="CHEBI:35235"/>
    </reaction>
    <physiologicalReaction direction="right-to-left" evidence="3">
        <dbReference type="Rhea" id="RHEA:68234"/>
    </physiologicalReaction>
</comment>
<comment type="catalytic activity">
    <reaction evidence="3">
        <text>L-methionine(in) + Na(+)(in) = L-methionine(out) + Na(+)(out)</text>
        <dbReference type="Rhea" id="RHEA:68240"/>
        <dbReference type="ChEBI" id="CHEBI:29101"/>
        <dbReference type="ChEBI" id="CHEBI:57844"/>
    </reaction>
    <physiologicalReaction direction="right-to-left" evidence="3">
        <dbReference type="Rhea" id="RHEA:68242"/>
    </physiologicalReaction>
</comment>
<comment type="catalytic activity">
    <reaction evidence="3">
        <text>glycine(in) + Na(+)(in) = glycine(out) + Na(+)(out)</text>
        <dbReference type="Rhea" id="RHEA:68228"/>
        <dbReference type="ChEBI" id="CHEBI:29101"/>
        <dbReference type="ChEBI" id="CHEBI:57305"/>
    </reaction>
    <physiologicalReaction direction="right-to-left" evidence="3">
        <dbReference type="Rhea" id="RHEA:68230"/>
    </physiologicalReaction>
</comment>
<comment type="catalytic activity">
    <reaction evidence="3">
        <text>L-threonine(in) + Na(+)(in) = L-threonine(out) + Na(+)(out)</text>
        <dbReference type="Rhea" id="RHEA:69999"/>
        <dbReference type="ChEBI" id="CHEBI:29101"/>
        <dbReference type="ChEBI" id="CHEBI:57926"/>
    </reaction>
    <physiologicalReaction direction="right-to-left" evidence="3">
        <dbReference type="Rhea" id="RHEA:70001"/>
    </physiologicalReaction>
</comment>
<comment type="catalytic activity">
    <reaction evidence="3">
        <text>L-proline(in) + Na(+)(in) = L-proline(out) + Na(+)(out)</text>
        <dbReference type="Rhea" id="RHEA:28967"/>
        <dbReference type="ChEBI" id="CHEBI:29101"/>
        <dbReference type="ChEBI" id="CHEBI:60039"/>
    </reaction>
    <physiologicalReaction direction="right-to-left" evidence="3">
        <dbReference type="Rhea" id="RHEA:28969"/>
    </physiologicalReaction>
</comment>
<comment type="activity regulation">
    <text evidence="3">Inhibited by alpha-(methylamino)isobutyric acid (MeAIB). Inhibited by lithium, potassium, choline ions, N-methylglucamine. The pH dependence has an allosteric effect on the transport.</text>
</comment>
<comment type="subcellular location">
    <subcellularLocation>
        <location evidence="3">Cell membrane</location>
        <topology evidence="3">Multi-pass membrane protein</topology>
    </subcellularLocation>
    <text evidence="3">Restricted to the somatodendritic compartment of neurons. Found in the cellular processes of neurons in the developing brain.</text>
</comment>
<comment type="PTM">
    <text evidence="1">N-glycosylation plays an important role in the L-glutamine transport.</text>
</comment>
<comment type="similarity">
    <text evidence="6">Belongs to the amino acid/polyamine transporter 2 family.</text>
</comment>
<dbReference type="EMBL" id="CR861417">
    <property type="protein sequence ID" value="CAH93473.1"/>
    <property type="molecule type" value="mRNA"/>
</dbReference>
<dbReference type="RefSeq" id="NP_001127036.1">
    <property type="nucleotide sequence ID" value="NM_001133564.1"/>
</dbReference>
<dbReference type="SMR" id="Q5R443"/>
<dbReference type="STRING" id="9601.ENSPPYP00000005062"/>
<dbReference type="GlyCosmos" id="Q5R443">
    <property type="glycosylation" value="2 sites, No reported glycans"/>
</dbReference>
<dbReference type="GeneID" id="100174062"/>
<dbReference type="KEGG" id="pon:100174062"/>
<dbReference type="CTD" id="81539"/>
<dbReference type="eggNOG" id="KOG1305">
    <property type="taxonomic scope" value="Eukaryota"/>
</dbReference>
<dbReference type="InParanoid" id="Q5R443"/>
<dbReference type="OrthoDB" id="655540at2759"/>
<dbReference type="Proteomes" id="UP000001595">
    <property type="component" value="Unplaced"/>
</dbReference>
<dbReference type="GO" id="GO:0005886">
    <property type="term" value="C:plasma membrane"/>
    <property type="evidence" value="ECO:0000250"/>
    <property type="project" value="UniProtKB"/>
</dbReference>
<dbReference type="GO" id="GO:0015655">
    <property type="term" value="F:alanine:sodium symporter activity"/>
    <property type="evidence" value="ECO:0000250"/>
    <property type="project" value="UniProtKB"/>
</dbReference>
<dbReference type="GO" id="GO:0005283">
    <property type="term" value="F:amino acid:sodium symporter activity"/>
    <property type="evidence" value="ECO:0000250"/>
    <property type="project" value="UniProtKB"/>
</dbReference>
<dbReference type="GO" id="GO:0015375">
    <property type="term" value="F:glycine:sodium symporter activity"/>
    <property type="evidence" value="ECO:0000250"/>
    <property type="project" value="UniProtKB"/>
</dbReference>
<dbReference type="GO" id="GO:0015186">
    <property type="term" value="F:L-glutamine transmembrane transporter activity"/>
    <property type="evidence" value="ECO:0000250"/>
    <property type="project" value="UniProtKB"/>
</dbReference>
<dbReference type="GO" id="GO:0005295">
    <property type="term" value="F:neutral L-amino acid:sodium symporter activity"/>
    <property type="evidence" value="ECO:0000250"/>
    <property type="project" value="UniProtKB"/>
</dbReference>
<dbReference type="GO" id="GO:0005298">
    <property type="term" value="F:proline:sodium symporter activity"/>
    <property type="evidence" value="ECO:0000250"/>
    <property type="project" value="UniProtKB"/>
</dbReference>
<dbReference type="GO" id="GO:0043090">
    <property type="term" value="P:amino acid import"/>
    <property type="evidence" value="ECO:0000250"/>
    <property type="project" value="UniProtKB"/>
</dbReference>
<dbReference type="GO" id="GO:0009449">
    <property type="term" value="P:gamma-aminobutyric acid biosynthetic process"/>
    <property type="evidence" value="ECO:0000250"/>
    <property type="project" value="UniProtKB"/>
</dbReference>
<dbReference type="GO" id="GO:0006868">
    <property type="term" value="P:glutamine transport"/>
    <property type="evidence" value="ECO:0000250"/>
    <property type="project" value="UniProtKB"/>
</dbReference>
<dbReference type="GO" id="GO:1903803">
    <property type="term" value="P:L-glutamine import across plasma membrane"/>
    <property type="evidence" value="ECO:0000250"/>
    <property type="project" value="UniProtKB"/>
</dbReference>
<dbReference type="GO" id="GO:0048167">
    <property type="term" value="P:regulation of synaptic plasticity"/>
    <property type="evidence" value="ECO:0000250"/>
    <property type="project" value="UniProtKB"/>
</dbReference>
<dbReference type="GO" id="GO:0032228">
    <property type="term" value="P:regulation of synaptic transmission, GABAergic"/>
    <property type="evidence" value="ECO:0000250"/>
    <property type="project" value="UniProtKB"/>
</dbReference>
<dbReference type="InterPro" id="IPR013057">
    <property type="entry name" value="AA_transpt_TM"/>
</dbReference>
<dbReference type="PANTHER" id="PTHR22950">
    <property type="entry name" value="AMINO ACID TRANSPORTER"/>
    <property type="match status" value="1"/>
</dbReference>
<dbReference type="PANTHER" id="PTHR22950:SF184">
    <property type="entry name" value="SODIUM-COUPLED NEUTRAL AMINO ACID SYMPORTER 1"/>
    <property type="match status" value="1"/>
</dbReference>
<dbReference type="Pfam" id="PF01490">
    <property type="entry name" value="Aa_trans"/>
    <property type="match status" value="1"/>
</dbReference>
<protein>
    <recommendedName>
        <fullName evidence="2">Sodium-coupled neutral amino acid symporter 1</fullName>
    </recommendedName>
    <alternativeName>
        <fullName>Amino acid transporter A1</fullName>
    </alternativeName>
    <alternativeName>
        <fullName>N-system amino acid transporter 2</fullName>
    </alternativeName>
    <alternativeName>
        <fullName>Solute carrier family 38 member 1</fullName>
    </alternativeName>
    <alternativeName>
        <fullName>System A amino acid transporter 1</fullName>
    </alternativeName>
    <alternativeName>
        <fullName>System N amino acid transporter 1</fullName>
    </alternativeName>
</protein>
<gene>
    <name evidence="2" type="primary">SLC38A1</name>
    <name type="synonym">SNAT1</name>
</gene>
<reference key="1">
    <citation type="submission" date="2004-11" db="EMBL/GenBank/DDBJ databases">
        <authorList>
            <consortium name="The German cDNA consortium"/>
        </authorList>
    </citation>
    <scope>NUCLEOTIDE SEQUENCE [LARGE SCALE MRNA]</scope>
    <source>
        <tissue>Brain cortex</tissue>
    </source>
</reference>
<organism>
    <name type="scientific">Pongo abelii</name>
    <name type="common">Sumatran orangutan</name>
    <name type="synonym">Pongo pygmaeus abelii</name>
    <dbReference type="NCBI Taxonomy" id="9601"/>
    <lineage>
        <taxon>Eukaryota</taxon>
        <taxon>Metazoa</taxon>
        <taxon>Chordata</taxon>
        <taxon>Craniata</taxon>
        <taxon>Vertebrata</taxon>
        <taxon>Euteleostomi</taxon>
        <taxon>Mammalia</taxon>
        <taxon>Eutheria</taxon>
        <taxon>Euarchontoglires</taxon>
        <taxon>Primates</taxon>
        <taxon>Haplorrhini</taxon>
        <taxon>Catarrhini</taxon>
        <taxon>Hominidae</taxon>
        <taxon>Pongo</taxon>
    </lineage>
</organism>